<gene>
    <name evidence="1" type="primary">rpsF</name>
    <name type="ordered locus">BA_5723</name>
    <name type="ordered locus">GBAA_5723</name>
    <name type="ordered locus">BAS5327</name>
</gene>
<reference key="1">
    <citation type="journal article" date="2003" name="Nature">
        <title>The genome sequence of Bacillus anthracis Ames and comparison to closely related bacteria.</title>
        <authorList>
            <person name="Read T.D."/>
            <person name="Peterson S.N."/>
            <person name="Tourasse N.J."/>
            <person name="Baillie L.W."/>
            <person name="Paulsen I.T."/>
            <person name="Nelson K.E."/>
            <person name="Tettelin H."/>
            <person name="Fouts D.E."/>
            <person name="Eisen J.A."/>
            <person name="Gill S.R."/>
            <person name="Holtzapple E.K."/>
            <person name="Okstad O.A."/>
            <person name="Helgason E."/>
            <person name="Rilstone J."/>
            <person name="Wu M."/>
            <person name="Kolonay J.F."/>
            <person name="Beanan M.J."/>
            <person name="Dodson R.J."/>
            <person name="Brinkac L.M."/>
            <person name="Gwinn M.L."/>
            <person name="DeBoy R.T."/>
            <person name="Madpu R."/>
            <person name="Daugherty S.C."/>
            <person name="Durkin A.S."/>
            <person name="Haft D.H."/>
            <person name="Nelson W.C."/>
            <person name="Peterson J.D."/>
            <person name="Pop M."/>
            <person name="Khouri H.M."/>
            <person name="Radune D."/>
            <person name="Benton J.L."/>
            <person name="Mahamoud Y."/>
            <person name="Jiang L."/>
            <person name="Hance I.R."/>
            <person name="Weidman J.F."/>
            <person name="Berry K.J."/>
            <person name="Plaut R.D."/>
            <person name="Wolf A.M."/>
            <person name="Watkins K.L."/>
            <person name="Nierman W.C."/>
            <person name="Hazen A."/>
            <person name="Cline R.T."/>
            <person name="Redmond C."/>
            <person name="Thwaite J.E."/>
            <person name="White O."/>
            <person name="Salzberg S.L."/>
            <person name="Thomason B."/>
            <person name="Friedlander A.M."/>
            <person name="Koehler T.M."/>
            <person name="Hanna P.C."/>
            <person name="Kolstoe A.-B."/>
            <person name="Fraser C.M."/>
        </authorList>
    </citation>
    <scope>NUCLEOTIDE SEQUENCE [LARGE SCALE GENOMIC DNA]</scope>
    <source>
        <strain>Ames / isolate Porton</strain>
    </source>
</reference>
<reference key="2">
    <citation type="journal article" date="2009" name="J. Bacteriol.">
        <title>The complete genome sequence of Bacillus anthracis Ames 'Ancestor'.</title>
        <authorList>
            <person name="Ravel J."/>
            <person name="Jiang L."/>
            <person name="Stanley S.T."/>
            <person name="Wilson M.R."/>
            <person name="Decker R.S."/>
            <person name="Read T.D."/>
            <person name="Worsham P."/>
            <person name="Keim P.S."/>
            <person name="Salzberg S.L."/>
            <person name="Fraser-Liggett C.M."/>
            <person name="Rasko D.A."/>
        </authorList>
    </citation>
    <scope>NUCLEOTIDE SEQUENCE [LARGE SCALE GENOMIC DNA]</scope>
    <source>
        <strain>Ames ancestor</strain>
    </source>
</reference>
<reference key="3">
    <citation type="submission" date="2004-01" db="EMBL/GenBank/DDBJ databases">
        <title>Complete genome sequence of Bacillus anthracis Sterne.</title>
        <authorList>
            <person name="Brettin T.S."/>
            <person name="Bruce D."/>
            <person name="Challacombe J.F."/>
            <person name="Gilna P."/>
            <person name="Han C."/>
            <person name="Hill K."/>
            <person name="Hitchcock P."/>
            <person name="Jackson P."/>
            <person name="Keim P."/>
            <person name="Longmire J."/>
            <person name="Lucas S."/>
            <person name="Okinaka R."/>
            <person name="Richardson P."/>
            <person name="Rubin E."/>
            <person name="Tice H."/>
        </authorList>
    </citation>
    <scope>NUCLEOTIDE SEQUENCE [LARGE SCALE GENOMIC DNA]</scope>
    <source>
        <strain>Sterne</strain>
    </source>
</reference>
<evidence type="ECO:0000255" key="1">
    <source>
        <dbReference type="HAMAP-Rule" id="MF_00360"/>
    </source>
</evidence>
<evidence type="ECO:0000305" key="2"/>
<evidence type="ECO:0007829" key="3">
    <source>
        <dbReference type="PDB" id="3R3T"/>
    </source>
</evidence>
<sequence length="96" mass="11269">MRKYEIMYIIRPGVEEEAQKALVERFAGVLTNNGAEIINTKEWGKRRLAYEINDLREGFYMILNVNANAEAINEFDRLAKINEDILRHIVVKEEEK</sequence>
<comment type="function">
    <text evidence="1">Binds together with bS18 to 16S ribosomal RNA.</text>
</comment>
<comment type="similarity">
    <text evidence="1">Belongs to the bacterial ribosomal protein bS6 family.</text>
</comment>
<name>RS6_BACAN</name>
<feature type="chain" id="PRO_0000176717" description="Small ribosomal subunit protein bS6">
    <location>
        <begin position="1"/>
        <end position="96"/>
    </location>
</feature>
<feature type="helix" evidence="3">
    <location>
        <begin position="16"/>
        <end position="31"/>
    </location>
</feature>
<feature type="turn" evidence="3">
    <location>
        <begin position="32"/>
        <end position="34"/>
    </location>
</feature>
<feature type="helix" evidence="3">
    <location>
        <begin position="69"/>
        <end position="81"/>
    </location>
</feature>
<dbReference type="EMBL" id="AE016879">
    <property type="protein sequence ID" value="AAP29355.1"/>
    <property type="molecule type" value="Genomic_DNA"/>
</dbReference>
<dbReference type="EMBL" id="AE017334">
    <property type="protein sequence ID" value="AAT34884.1"/>
    <property type="molecule type" value="Genomic_DNA"/>
</dbReference>
<dbReference type="EMBL" id="AE017225">
    <property type="protein sequence ID" value="AAT57614.1"/>
    <property type="molecule type" value="Genomic_DNA"/>
</dbReference>
<dbReference type="RefSeq" id="NP_847869.1">
    <property type="nucleotide sequence ID" value="NC_003997.3"/>
</dbReference>
<dbReference type="RefSeq" id="WP_001233779.1">
    <property type="nucleotide sequence ID" value="NZ_WXXJ01000028.1"/>
</dbReference>
<dbReference type="RefSeq" id="YP_031564.1">
    <property type="nucleotide sequence ID" value="NC_005945.1"/>
</dbReference>
<dbReference type="PDB" id="3R3T">
    <property type="method" value="X-ray"/>
    <property type="resolution" value="2.30 A"/>
    <property type="chains" value="A/B=1-96"/>
</dbReference>
<dbReference type="PDBsum" id="3R3T"/>
<dbReference type="SMR" id="Q81JI2"/>
<dbReference type="STRING" id="261594.GBAA_5723"/>
<dbReference type="DNASU" id="1085492"/>
<dbReference type="GeneID" id="75088663"/>
<dbReference type="KEGG" id="ban:BA_5723"/>
<dbReference type="KEGG" id="bar:GBAA_5723"/>
<dbReference type="KEGG" id="bat:BAS5327"/>
<dbReference type="PATRIC" id="fig|198094.11.peg.5685"/>
<dbReference type="eggNOG" id="COG0360">
    <property type="taxonomic scope" value="Bacteria"/>
</dbReference>
<dbReference type="HOGENOM" id="CLU_113441_5_3_9"/>
<dbReference type="OMA" id="AYPIQHK"/>
<dbReference type="OrthoDB" id="9812702at2"/>
<dbReference type="EvolutionaryTrace" id="Q81JI2"/>
<dbReference type="Proteomes" id="UP000000427">
    <property type="component" value="Chromosome"/>
</dbReference>
<dbReference type="Proteomes" id="UP000000594">
    <property type="component" value="Chromosome"/>
</dbReference>
<dbReference type="GO" id="GO:0005737">
    <property type="term" value="C:cytoplasm"/>
    <property type="evidence" value="ECO:0007669"/>
    <property type="project" value="UniProtKB-ARBA"/>
</dbReference>
<dbReference type="GO" id="GO:1990904">
    <property type="term" value="C:ribonucleoprotein complex"/>
    <property type="evidence" value="ECO:0007669"/>
    <property type="project" value="UniProtKB-KW"/>
</dbReference>
<dbReference type="GO" id="GO:0005840">
    <property type="term" value="C:ribosome"/>
    <property type="evidence" value="ECO:0007669"/>
    <property type="project" value="UniProtKB-KW"/>
</dbReference>
<dbReference type="GO" id="GO:0070181">
    <property type="term" value="F:small ribosomal subunit rRNA binding"/>
    <property type="evidence" value="ECO:0007669"/>
    <property type="project" value="TreeGrafter"/>
</dbReference>
<dbReference type="GO" id="GO:0003735">
    <property type="term" value="F:structural constituent of ribosome"/>
    <property type="evidence" value="ECO:0007669"/>
    <property type="project" value="InterPro"/>
</dbReference>
<dbReference type="GO" id="GO:0006412">
    <property type="term" value="P:translation"/>
    <property type="evidence" value="ECO:0007669"/>
    <property type="project" value="UniProtKB-UniRule"/>
</dbReference>
<dbReference type="CDD" id="cd00473">
    <property type="entry name" value="bS6"/>
    <property type="match status" value="1"/>
</dbReference>
<dbReference type="FunFam" id="3.30.70.60:FF:000002">
    <property type="entry name" value="30S ribosomal protein S6"/>
    <property type="match status" value="1"/>
</dbReference>
<dbReference type="Gene3D" id="3.30.70.60">
    <property type="match status" value="1"/>
</dbReference>
<dbReference type="HAMAP" id="MF_00360">
    <property type="entry name" value="Ribosomal_bS6"/>
    <property type="match status" value="1"/>
</dbReference>
<dbReference type="InterPro" id="IPR000529">
    <property type="entry name" value="Ribosomal_bS6"/>
</dbReference>
<dbReference type="InterPro" id="IPR020815">
    <property type="entry name" value="Ribosomal_bS6_CS"/>
</dbReference>
<dbReference type="InterPro" id="IPR035980">
    <property type="entry name" value="Ribosomal_bS6_sf"/>
</dbReference>
<dbReference type="InterPro" id="IPR020814">
    <property type="entry name" value="Ribosomal_S6_plastid/chlpt"/>
</dbReference>
<dbReference type="InterPro" id="IPR014717">
    <property type="entry name" value="Transl_elong_EF1B/ribsomal_bS6"/>
</dbReference>
<dbReference type="NCBIfam" id="TIGR00166">
    <property type="entry name" value="S6"/>
    <property type="match status" value="1"/>
</dbReference>
<dbReference type="PANTHER" id="PTHR21011">
    <property type="entry name" value="MITOCHONDRIAL 28S RIBOSOMAL PROTEIN S6"/>
    <property type="match status" value="1"/>
</dbReference>
<dbReference type="PANTHER" id="PTHR21011:SF1">
    <property type="entry name" value="SMALL RIBOSOMAL SUBUNIT PROTEIN BS6M"/>
    <property type="match status" value="1"/>
</dbReference>
<dbReference type="Pfam" id="PF01250">
    <property type="entry name" value="Ribosomal_S6"/>
    <property type="match status" value="1"/>
</dbReference>
<dbReference type="SUPFAM" id="SSF54995">
    <property type="entry name" value="Ribosomal protein S6"/>
    <property type="match status" value="1"/>
</dbReference>
<dbReference type="PROSITE" id="PS01048">
    <property type="entry name" value="RIBOSOMAL_S6"/>
    <property type="match status" value="1"/>
</dbReference>
<protein>
    <recommendedName>
        <fullName evidence="1">Small ribosomal subunit protein bS6</fullName>
    </recommendedName>
    <alternativeName>
        <fullName evidence="2">30S ribosomal protein S6</fullName>
    </alternativeName>
</protein>
<keyword id="KW-0002">3D-structure</keyword>
<keyword id="KW-1185">Reference proteome</keyword>
<keyword id="KW-0687">Ribonucleoprotein</keyword>
<keyword id="KW-0689">Ribosomal protein</keyword>
<keyword id="KW-0694">RNA-binding</keyword>
<keyword id="KW-0699">rRNA-binding</keyword>
<organism>
    <name type="scientific">Bacillus anthracis</name>
    <dbReference type="NCBI Taxonomy" id="1392"/>
    <lineage>
        <taxon>Bacteria</taxon>
        <taxon>Bacillati</taxon>
        <taxon>Bacillota</taxon>
        <taxon>Bacilli</taxon>
        <taxon>Bacillales</taxon>
        <taxon>Bacillaceae</taxon>
        <taxon>Bacillus</taxon>
        <taxon>Bacillus cereus group</taxon>
    </lineage>
</organism>
<proteinExistence type="evidence at protein level"/>
<accession>Q81JI2</accession>
<accession>Q6HQ24</accession>
<accession>Q6KJG8</accession>